<accession>Q6GGE2</accession>
<organism>
    <name type="scientific">Staphylococcus aureus (strain MRSA252)</name>
    <dbReference type="NCBI Taxonomy" id="282458"/>
    <lineage>
        <taxon>Bacteria</taxon>
        <taxon>Bacillati</taxon>
        <taxon>Bacillota</taxon>
        <taxon>Bacilli</taxon>
        <taxon>Bacillales</taxon>
        <taxon>Staphylococcaceae</taxon>
        <taxon>Staphylococcus</taxon>
    </lineage>
</organism>
<sequence length="296" mass="33168">MLLGSHVSMSGKKMLEGSAIEAHEYGETTFMIYTGAPQNTRRKSIEDLNITKGHEVMEKYGLSNIVVHAPYIINIANTTKPETFNLGVDFLQQEIERTQAIGAKDIVLHPGAHVGAGVDAGINKIIEGLNEVLTNDNNVRIALETMAGKGTEIGRSFEELARIIDGVHNNERLSVCFDTCHTHDAGYNVKEDFDGVLNEFDKIIGVDRIKVVHVNDSKNDRGAQKDRHENIGFGYIGFDALNYIVHHDSFKDIPKILETPYVGEDKKNKKPPYKLEIEMLKQQHFDPELKNKVMQQ</sequence>
<evidence type="ECO:0000255" key="1">
    <source>
        <dbReference type="HAMAP-Rule" id="MF_00152"/>
    </source>
</evidence>
<evidence type="ECO:0007829" key="2">
    <source>
        <dbReference type="PDB" id="8AXY"/>
    </source>
</evidence>
<evidence type="ECO:0007829" key="3">
    <source>
        <dbReference type="PDB" id="8EDD"/>
    </source>
</evidence>
<feature type="chain" id="PRO_0000190872" description="Probable endonuclease 4">
    <location>
        <begin position="1"/>
        <end position="296"/>
    </location>
</feature>
<feature type="binding site" evidence="1">
    <location>
        <position position="68"/>
    </location>
    <ligand>
        <name>Zn(2+)</name>
        <dbReference type="ChEBI" id="CHEBI:29105"/>
        <label>1</label>
    </ligand>
</feature>
<feature type="binding site" evidence="1">
    <location>
        <position position="109"/>
    </location>
    <ligand>
        <name>Zn(2+)</name>
        <dbReference type="ChEBI" id="CHEBI:29105"/>
        <label>1</label>
    </ligand>
</feature>
<feature type="binding site" evidence="1">
    <location>
        <position position="144"/>
    </location>
    <ligand>
        <name>Zn(2+)</name>
        <dbReference type="ChEBI" id="CHEBI:29105"/>
        <label>1</label>
    </ligand>
</feature>
<feature type="binding site" evidence="1">
    <location>
        <position position="144"/>
    </location>
    <ligand>
        <name>Zn(2+)</name>
        <dbReference type="ChEBI" id="CHEBI:29105"/>
        <label>2</label>
    </ligand>
</feature>
<feature type="binding site" evidence="1">
    <location>
        <position position="178"/>
    </location>
    <ligand>
        <name>Zn(2+)</name>
        <dbReference type="ChEBI" id="CHEBI:29105"/>
        <label>2</label>
    </ligand>
</feature>
<feature type="binding site" evidence="1">
    <location>
        <position position="181"/>
    </location>
    <ligand>
        <name>Zn(2+)</name>
        <dbReference type="ChEBI" id="CHEBI:29105"/>
        <label>3</label>
    </ligand>
</feature>
<feature type="binding site" evidence="1">
    <location>
        <position position="213"/>
    </location>
    <ligand>
        <name>Zn(2+)</name>
        <dbReference type="ChEBI" id="CHEBI:29105"/>
        <label>2</label>
    </ligand>
</feature>
<feature type="binding site" evidence="1">
    <location>
        <position position="226"/>
    </location>
    <ligand>
        <name>Zn(2+)</name>
        <dbReference type="ChEBI" id="CHEBI:29105"/>
        <label>3</label>
    </ligand>
</feature>
<feature type="binding site" evidence="1">
    <location>
        <position position="228"/>
    </location>
    <ligand>
        <name>Zn(2+)</name>
        <dbReference type="ChEBI" id="CHEBI:29105"/>
        <label>3</label>
    </ligand>
</feature>
<feature type="binding site" evidence="1">
    <location>
        <position position="258"/>
    </location>
    <ligand>
        <name>Zn(2+)</name>
        <dbReference type="ChEBI" id="CHEBI:29105"/>
        <label>2</label>
    </ligand>
</feature>
<feature type="strand" evidence="2">
    <location>
        <begin position="3"/>
        <end position="6"/>
    </location>
</feature>
<feature type="turn" evidence="2">
    <location>
        <begin position="11"/>
        <end position="14"/>
    </location>
</feature>
<feature type="helix" evidence="2">
    <location>
        <begin position="15"/>
        <end position="24"/>
    </location>
</feature>
<feature type="strand" evidence="3">
    <location>
        <begin position="28"/>
        <end position="32"/>
    </location>
</feature>
<feature type="helix" evidence="2">
    <location>
        <begin position="46"/>
        <end position="48"/>
    </location>
</feature>
<feature type="helix" evidence="2">
    <location>
        <begin position="50"/>
        <end position="60"/>
    </location>
</feature>
<feature type="strand" evidence="2">
    <location>
        <begin position="66"/>
        <end position="68"/>
    </location>
</feature>
<feature type="helix" evidence="2">
    <location>
        <begin position="81"/>
        <end position="101"/>
    </location>
</feature>
<feature type="strand" evidence="2">
    <location>
        <begin position="104"/>
        <end position="108"/>
    </location>
</feature>
<feature type="helix" evidence="2">
    <location>
        <begin position="118"/>
        <end position="132"/>
    </location>
</feature>
<feature type="strand" evidence="2">
    <location>
        <begin position="140"/>
        <end position="144"/>
    </location>
</feature>
<feature type="helix" evidence="2">
    <location>
        <begin position="157"/>
        <end position="166"/>
    </location>
</feature>
<feature type="helix" evidence="2">
    <location>
        <begin position="170"/>
        <end position="172"/>
    </location>
</feature>
<feature type="strand" evidence="2">
    <location>
        <begin position="173"/>
        <end position="178"/>
    </location>
</feature>
<feature type="helix" evidence="2">
    <location>
        <begin position="179"/>
        <end position="185"/>
    </location>
</feature>
<feature type="turn" evidence="2">
    <location>
        <begin position="189"/>
        <end position="191"/>
    </location>
</feature>
<feature type="helix" evidence="2">
    <location>
        <begin position="193"/>
        <end position="203"/>
    </location>
</feature>
<feature type="helix" evidence="2">
    <location>
        <begin position="206"/>
        <end position="208"/>
    </location>
</feature>
<feature type="strand" evidence="2">
    <location>
        <begin position="209"/>
        <end position="214"/>
    </location>
</feature>
<feature type="strand" evidence="2">
    <location>
        <begin position="216"/>
        <end position="219"/>
    </location>
</feature>
<feature type="strand" evidence="2">
    <location>
        <begin position="233"/>
        <end position="236"/>
    </location>
</feature>
<feature type="helix" evidence="2">
    <location>
        <begin position="238"/>
        <end position="245"/>
    </location>
</feature>
<feature type="helix" evidence="2">
    <location>
        <begin position="248"/>
        <end position="250"/>
    </location>
</feature>
<feature type="strand" evidence="2">
    <location>
        <begin position="255"/>
        <end position="257"/>
    </location>
</feature>
<feature type="helix" evidence="2">
    <location>
        <begin position="266"/>
        <end position="268"/>
    </location>
</feature>
<feature type="helix" evidence="2">
    <location>
        <begin position="273"/>
        <end position="282"/>
    </location>
</feature>
<feature type="helix" evidence="2">
    <location>
        <begin position="289"/>
        <end position="294"/>
    </location>
</feature>
<gene>
    <name evidence="1" type="primary">nfo</name>
    <name type="ordered locus">SAR1634</name>
</gene>
<comment type="function">
    <text evidence="1">Endonuclease IV plays a role in DNA repair. It cleaves phosphodiester bonds at apurinic or apyrimidinic (AP) sites, generating a 3'-hydroxyl group and a 5'-terminal sugar phosphate.</text>
</comment>
<comment type="catalytic activity">
    <reaction evidence="1">
        <text>Endonucleolytic cleavage to 5'-phosphooligonucleotide end-products.</text>
        <dbReference type="EC" id="3.1.21.2"/>
    </reaction>
</comment>
<comment type="cofactor">
    <cofactor evidence="1">
        <name>Zn(2+)</name>
        <dbReference type="ChEBI" id="CHEBI:29105"/>
    </cofactor>
    <text evidence="1">Binds 3 Zn(2+) ions.</text>
</comment>
<comment type="similarity">
    <text evidence="1">Belongs to the AP endonuclease 2 family.</text>
</comment>
<keyword id="KW-0002">3D-structure</keyword>
<keyword id="KW-0227">DNA damage</keyword>
<keyword id="KW-0234">DNA repair</keyword>
<keyword id="KW-0255">Endonuclease</keyword>
<keyword id="KW-0378">Hydrolase</keyword>
<keyword id="KW-0479">Metal-binding</keyword>
<keyword id="KW-0540">Nuclease</keyword>
<keyword id="KW-0862">Zinc</keyword>
<dbReference type="EC" id="3.1.21.2" evidence="1"/>
<dbReference type="EMBL" id="BX571856">
    <property type="protein sequence ID" value="CAG40629.1"/>
    <property type="molecule type" value="Genomic_DNA"/>
</dbReference>
<dbReference type="RefSeq" id="WP_000924211.1">
    <property type="nucleotide sequence ID" value="NC_002952.2"/>
</dbReference>
<dbReference type="PDB" id="8AXY">
    <property type="method" value="X-ray"/>
    <property type="resolution" value="1.05 A"/>
    <property type="chains" value="A=1-296"/>
</dbReference>
<dbReference type="PDB" id="8EDD">
    <property type="method" value="X-ray"/>
    <property type="resolution" value="1.50 A"/>
    <property type="chains" value="A=1-296"/>
</dbReference>
<dbReference type="PDB" id="8PKB">
    <property type="method" value="X-ray"/>
    <property type="resolution" value="1.90 A"/>
    <property type="chains" value="A=1-296"/>
</dbReference>
<dbReference type="PDBsum" id="8AXY"/>
<dbReference type="PDBsum" id="8EDD"/>
<dbReference type="PDBsum" id="8PKB"/>
<dbReference type="SMR" id="Q6GGE2"/>
<dbReference type="KEGG" id="sar:SAR1634"/>
<dbReference type="HOGENOM" id="CLU_025885_4_1_9"/>
<dbReference type="Proteomes" id="UP000000596">
    <property type="component" value="Chromosome"/>
</dbReference>
<dbReference type="GO" id="GO:0008833">
    <property type="term" value="F:deoxyribonuclease IV (phage-T4-induced) activity"/>
    <property type="evidence" value="ECO:0007669"/>
    <property type="project" value="UniProtKB-UniRule"/>
</dbReference>
<dbReference type="GO" id="GO:0003677">
    <property type="term" value="F:DNA binding"/>
    <property type="evidence" value="ECO:0007669"/>
    <property type="project" value="InterPro"/>
</dbReference>
<dbReference type="GO" id="GO:0003906">
    <property type="term" value="F:DNA-(apurinic or apyrimidinic site) endonuclease activity"/>
    <property type="evidence" value="ECO:0007669"/>
    <property type="project" value="TreeGrafter"/>
</dbReference>
<dbReference type="GO" id="GO:0008081">
    <property type="term" value="F:phosphoric diester hydrolase activity"/>
    <property type="evidence" value="ECO:0007669"/>
    <property type="project" value="TreeGrafter"/>
</dbReference>
<dbReference type="GO" id="GO:0008270">
    <property type="term" value="F:zinc ion binding"/>
    <property type="evidence" value="ECO:0007669"/>
    <property type="project" value="UniProtKB-UniRule"/>
</dbReference>
<dbReference type="GO" id="GO:0006284">
    <property type="term" value="P:base-excision repair"/>
    <property type="evidence" value="ECO:0007669"/>
    <property type="project" value="TreeGrafter"/>
</dbReference>
<dbReference type="CDD" id="cd00019">
    <property type="entry name" value="AP2Ec"/>
    <property type="match status" value="1"/>
</dbReference>
<dbReference type="FunFam" id="3.20.20.150:FF:000001">
    <property type="entry name" value="Probable endonuclease 4"/>
    <property type="match status" value="1"/>
</dbReference>
<dbReference type="Gene3D" id="3.20.20.150">
    <property type="entry name" value="Divalent-metal-dependent TIM barrel enzymes"/>
    <property type="match status" value="1"/>
</dbReference>
<dbReference type="HAMAP" id="MF_00152">
    <property type="entry name" value="Nfo"/>
    <property type="match status" value="1"/>
</dbReference>
<dbReference type="InterPro" id="IPR001719">
    <property type="entry name" value="AP_endonuc_2"/>
</dbReference>
<dbReference type="InterPro" id="IPR018246">
    <property type="entry name" value="AP_endonuc_F2_Zn_BS"/>
</dbReference>
<dbReference type="InterPro" id="IPR036237">
    <property type="entry name" value="Xyl_isomerase-like_sf"/>
</dbReference>
<dbReference type="InterPro" id="IPR013022">
    <property type="entry name" value="Xyl_isomerase-like_TIM-brl"/>
</dbReference>
<dbReference type="NCBIfam" id="TIGR00587">
    <property type="entry name" value="nfo"/>
    <property type="match status" value="1"/>
</dbReference>
<dbReference type="NCBIfam" id="NF002196">
    <property type="entry name" value="PRK01060.1-1"/>
    <property type="match status" value="1"/>
</dbReference>
<dbReference type="PANTHER" id="PTHR21445:SF0">
    <property type="entry name" value="APURINIC-APYRIMIDINIC ENDONUCLEASE"/>
    <property type="match status" value="1"/>
</dbReference>
<dbReference type="PANTHER" id="PTHR21445">
    <property type="entry name" value="ENDONUCLEASE IV ENDODEOXYRIBONUCLEASE IV"/>
    <property type="match status" value="1"/>
</dbReference>
<dbReference type="Pfam" id="PF01261">
    <property type="entry name" value="AP_endonuc_2"/>
    <property type="match status" value="1"/>
</dbReference>
<dbReference type="SMART" id="SM00518">
    <property type="entry name" value="AP2Ec"/>
    <property type="match status" value="1"/>
</dbReference>
<dbReference type="SUPFAM" id="SSF51658">
    <property type="entry name" value="Xylose isomerase-like"/>
    <property type="match status" value="1"/>
</dbReference>
<dbReference type="PROSITE" id="PS00729">
    <property type="entry name" value="AP_NUCLEASE_F2_1"/>
    <property type="match status" value="1"/>
</dbReference>
<dbReference type="PROSITE" id="PS00730">
    <property type="entry name" value="AP_NUCLEASE_F2_2"/>
    <property type="match status" value="1"/>
</dbReference>
<dbReference type="PROSITE" id="PS00731">
    <property type="entry name" value="AP_NUCLEASE_F2_3"/>
    <property type="match status" value="1"/>
</dbReference>
<dbReference type="PROSITE" id="PS51432">
    <property type="entry name" value="AP_NUCLEASE_F2_4"/>
    <property type="match status" value="1"/>
</dbReference>
<name>END4_STAAR</name>
<proteinExistence type="evidence at protein level"/>
<reference key="1">
    <citation type="journal article" date="2004" name="Proc. Natl. Acad. Sci. U.S.A.">
        <title>Complete genomes of two clinical Staphylococcus aureus strains: evidence for the rapid evolution of virulence and drug resistance.</title>
        <authorList>
            <person name="Holden M.T.G."/>
            <person name="Feil E.J."/>
            <person name="Lindsay J.A."/>
            <person name="Peacock S.J."/>
            <person name="Day N.P.J."/>
            <person name="Enright M.C."/>
            <person name="Foster T.J."/>
            <person name="Moore C.E."/>
            <person name="Hurst L."/>
            <person name="Atkin R."/>
            <person name="Barron A."/>
            <person name="Bason N."/>
            <person name="Bentley S.D."/>
            <person name="Chillingworth C."/>
            <person name="Chillingworth T."/>
            <person name="Churcher C."/>
            <person name="Clark L."/>
            <person name="Corton C."/>
            <person name="Cronin A."/>
            <person name="Doggett J."/>
            <person name="Dowd L."/>
            <person name="Feltwell T."/>
            <person name="Hance Z."/>
            <person name="Harris B."/>
            <person name="Hauser H."/>
            <person name="Holroyd S."/>
            <person name="Jagels K."/>
            <person name="James K.D."/>
            <person name="Lennard N."/>
            <person name="Line A."/>
            <person name="Mayes R."/>
            <person name="Moule S."/>
            <person name="Mungall K."/>
            <person name="Ormond D."/>
            <person name="Quail M.A."/>
            <person name="Rabbinowitsch E."/>
            <person name="Rutherford K.M."/>
            <person name="Sanders M."/>
            <person name="Sharp S."/>
            <person name="Simmonds M."/>
            <person name="Stevens K."/>
            <person name="Whitehead S."/>
            <person name="Barrell B.G."/>
            <person name="Spratt B.G."/>
            <person name="Parkhill J."/>
        </authorList>
    </citation>
    <scope>NUCLEOTIDE SEQUENCE [LARGE SCALE GENOMIC DNA]</scope>
    <source>
        <strain>MRSA252</strain>
    </source>
</reference>
<protein>
    <recommendedName>
        <fullName evidence="1">Probable endonuclease 4</fullName>
        <ecNumber evidence="1">3.1.21.2</ecNumber>
    </recommendedName>
    <alternativeName>
        <fullName evidence="1">Endodeoxyribonuclease IV</fullName>
    </alternativeName>
    <alternativeName>
        <fullName evidence="1">Endonuclease IV</fullName>
    </alternativeName>
</protein>